<name>URE1_BLOFL</name>
<reference key="1">
    <citation type="journal article" date="2003" name="Proc. Natl. Acad. Sci. U.S.A.">
        <title>The genome sequence of Blochmannia floridanus: comparative analysis of reduced genomes.</title>
        <authorList>
            <person name="Gil R."/>
            <person name="Silva F.J."/>
            <person name="Zientz E."/>
            <person name="Delmotte F."/>
            <person name="Gonzalez-Candelas F."/>
            <person name="Latorre A."/>
            <person name="Rausell C."/>
            <person name="Kamerbeek J."/>
            <person name="Gadau J."/>
            <person name="Hoelldobler B."/>
            <person name="van Ham R.C.H.J."/>
            <person name="Gross R."/>
            <person name="Moya A."/>
        </authorList>
    </citation>
    <scope>NUCLEOTIDE SEQUENCE [LARGE SCALE GENOMIC DNA]</scope>
</reference>
<protein>
    <recommendedName>
        <fullName evidence="1">Urease subunit alpha</fullName>
        <ecNumber evidence="1">3.5.1.5</ecNumber>
    </recommendedName>
    <alternativeName>
        <fullName evidence="1">Urea amidohydrolase subunit alpha</fullName>
    </alternativeName>
</protein>
<accession>Q7VRS6</accession>
<sequence>MNMLNKKIYAEMYGPTVGDSVRLADTDLWVKIEKDFTIYGEEVKFGGGKVIRDGMGQGQMNNKECVDLVLTNAIIIDYWGVIKADIGINNGRIVGIGKSGNPDIQPGVTIYIGPGTEVISAEGKIVTAGGIDVHVHFICPQQIEEALSSGMTTLIGGGTGPTTGSNATTCTPGVWFISRMLQAADALPINIGFTGKGSSALPESLIEQIHAGAIGLKVHEDWGATPATIDCCLNVADNFDVQVSIHTDTLNESGFLETTISAIKNRTIHAYHVEGAGGGHSPDIIRICELNNVLPSSTNPTLPYTINTVDEHLDMMMVCHNLNCNLPEDIAFAESRIRRETIAAEDILHDLGALSMISSDSQAMGRIGETILRTWQTAHKMKLQRGSLLGDDQYNDNTRIKRYIAKYTINPAITHGIAHEVGSVEIGKLADLVLWSPVFFGVKPELIVKGGMIVSSVMGDPNASIPTPQPVYYRLMFGSYDLAKCATRMTFISQSSYDVGVVENLRLNSLIGISKRCRNIKKDHMINNNLKPVMEVDPQTYEVRANGELLVCEPVSVVPMSQRYFLF</sequence>
<proteinExistence type="inferred from homology"/>
<organism>
    <name type="scientific">Blochmanniella floridana</name>
    <dbReference type="NCBI Taxonomy" id="203907"/>
    <lineage>
        <taxon>Bacteria</taxon>
        <taxon>Pseudomonadati</taxon>
        <taxon>Pseudomonadota</taxon>
        <taxon>Gammaproteobacteria</taxon>
        <taxon>Enterobacterales</taxon>
        <taxon>Enterobacteriaceae</taxon>
        <taxon>ant endosymbionts</taxon>
        <taxon>Candidatus Blochmanniella</taxon>
    </lineage>
</organism>
<feature type="chain" id="PRO_0000234134" description="Urease subunit alpha">
    <location>
        <begin position="1"/>
        <end position="567"/>
    </location>
</feature>
<feature type="domain" description="Urease" evidence="1">
    <location>
        <begin position="129"/>
        <end position="567"/>
    </location>
</feature>
<feature type="active site" description="Proton donor" evidence="1">
    <location>
        <position position="320"/>
    </location>
</feature>
<feature type="binding site" evidence="1">
    <location>
        <position position="134"/>
    </location>
    <ligand>
        <name>Ni(2+)</name>
        <dbReference type="ChEBI" id="CHEBI:49786"/>
        <label>1</label>
    </ligand>
</feature>
<feature type="binding site" evidence="1">
    <location>
        <position position="136"/>
    </location>
    <ligand>
        <name>Ni(2+)</name>
        <dbReference type="ChEBI" id="CHEBI:49786"/>
        <label>1</label>
    </ligand>
</feature>
<feature type="binding site" description="via carbamate group" evidence="1">
    <location>
        <position position="217"/>
    </location>
    <ligand>
        <name>Ni(2+)</name>
        <dbReference type="ChEBI" id="CHEBI:49786"/>
        <label>1</label>
    </ligand>
</feature>
<feature type="binding site" description="via carbamate group" evidence="1">
    <location>
        <position position="217"/>
    </location>
    <ligand>
        <name>Ni(2+)</name>
        <dbReference type="ChEBI" id="CHEBI:49786"/>
        <label>2</label>
    </ligand>
</feature>
<feature type="binding site" evidence="1">
    <location>
        <position position="219"/>
    </location>
    <ligand>
        <name>substrate</name>
    </ligand>
</feature>
<feature type="binding site" evidence="1">
    <location>
        <position position="246"/>
    </location>
    <ligand>
        <name>Ni(2+)</name>
        <dbReference type="ChEBI" id="CHEBI:49786"/>
        <label>2</label>
    </ligand>
</feature>
<feature type="binding site" evidence="1">
    <location>
        <position position="272"/>
    </location>
    <ligand>
        <name>Ni(2+)</name>
        <dbReference type="ChEBI" id="CHEBI:49786"/>
        <label>2</label>
    </ligand>
</feature>
<feature type="binding site" evidence="1">
    <location>
        <position position="360"/>
    </location>
    <ligand>
        <name>Ni(2+)</name>
        <dbReference type="ChEBI" id="CHEBI:49786"/>
        <label>1</label>
    </ligand>
</feature>
<feature type="modified residue" description="N6-carboxylysine" evidence="1">
    <location>
        <position position="217"/>
    </location>
</feature>
<comment type="catalytic activity">
    <reaction evidence="1">
        <text>urea + 2 H2O + H(+) = hydrogencarbonate + 2 NH4(+)</text>
        <dbReference type="Rhea" id="RHEA:20557"/>
        <dbReference type="ChEBI" id="CHEBI:15377"/>
        <dbReference type="ChEBI" id="CHEBI:15378"/>
        <dbReference type="ChEBI" id="CHEBI:16199"/>
        <dbReference type="ChEBI" id="CHEBI:17544"/>
        <dbReference type="ChEBI" id="CHEBI:28938"/>
        <dbReference type="EC" id="3.5.1.5"/>
    </reaction>
</comment>
<comment type="cofactor">
    <cofactor evidence="1">
        <name>Ni cation</name>
        <dbReference type="ChEBI" id="CHEBI:25516"/>
    </cofactor>
    <text evidence="1">Binds 2 nickel ions per subunit.</text>
</comment>
<comment type="pathway">
    <text evidence="1">Nitrogen metabolism; urea degradation; CO(2) and NH(3) from urea (urease route): step 1/1.</text>
</comment>
<comment type="subunit">
    <text evidence="1">Heterotrimer of UreA (gamma), UreB (beta) and UreC (alpha) subunits. Three heterotrimers associate to form the active enzyme.</text>
</comment>
<comment type="subcellular location">
    <subcellularLocation>
        <location evidence="1">Cytoplasm</location>
    </subcellularLocation>
</comment>
<comment type="PTM">
    <text evidence="1">Carboxylation allows a single lysine to coordinate two nickel ions.</text>
</comment>
<comment type="similarity">
    <text evidence="1">Belongs to the metallo-dependent hydrolases superfamily. Urease alpha subunit family.</text>
</comment>
<evidence type="ECO:0000255" key="1">
    <source>
        <dbReference type="HAMAP-Rule" id="MF_01953"/>
    </source>
</evidence>
<gene>
    <name evidence="1" type="primary">ureC</name>
    <name type="ordered locus">Bfl523</name>
</gene>
<dbReference type="EC" id="3.5.1.5" evidence="1"/>
<dbReference type="EMBL" id="BX248583">
    <property type="protein sequence ID" value="CAD83209.1"/>
    <property type="molecule type" value="Genomic_DNA"/>
</dbReference>
<dbReference type="SMR" id="Q7VRS6"/>
<dbReference type="STRING" id="203907.Bfl523"/>
<dbReference type="KEGG" id="bfl:Bfl523"/>
<dbReference type="eggNOG" id="COG0804">
    <property type="taxonomic scope" value="Bacteria"/>
</dbReference>
<dbReference type="HOGENOM" id="CLU_000980_0_0_6"/>
<dbReference type="OrthoDB" id="9802793at2"/>
<dbReference type="UniPathway" id="UPA00258">
    <property type="reaction ID" value="UER00370"/>
</dbReference>
<dbReference type="Proteomes" id="UP000002192">
    <property type="component" value="Chromosome"/>
</dbReference>
<dbReference type="GO" id="GO:0005737">
    <property type="term" value="C:cytoplasm"/>
    <property type="evidence" value="ECO:0007669"/>
    <property type="project" value="UniProtKB-SubCell"/>
</dbReference>
<dbReference type="GO" id="GO:0016151">
    <property type="term" value="F:nickel cation binding"/>
    <property type="evidence" value="ECO:0007669"/>
    <property type="project" value="UniProtKB-UniRule"/>
</dbReference>
<dbReference type="GO" id="GO:0009039">
    <property type="term" value="F:urease activity"/>
    <property type="evidence" value="ECO:0007669"/>
    <property type="project" value="UniProtKB-UniRule"/>
</dbReference>
<dbReference type="GO" id="GO:0043419">
    <property type="term" value="P:urea catabolic process"/>
    <property type="evidence" value="ECO:0007669"/>
    <property type="project" value="UniProtKB-UniRule"/>
</dbReference>
<dbReference type="CDD" id="cd00375">
    <property type="entry name" value="Urease_alpha"/>
    <property type="match status" value="1"/>
</dbReference>
<dbReference type="Gene3D" id="3.20.20.140">
    <property type="entry name" value="Metal-dependent hydrolases"/>
    <property type="match status" value="1"/>
</dbReference>
<dbReference type="Gene3D" id="2.30.40.10">
    <property type="entry name" value="Urease, subunit C, domain 1"/>
    <property type="match status" value="1"/>
</dbReference>
<dbReference type="HAMAP" id="MF_01953">
    <property type="entry name" value="Urease_alpha"/>
    <property type="match status" value="1"/>
</dbReference>
<dbReference type="InterPro" id="IPR006680">
    <property type="entry name" value="Amidohydro-rel"/>
</dbReference>
<dbReference type="InterPro" id="IPR011059">
    <property type="entry name" value="Metal-dep_hydrolase_composite"/>
</dbReference>
<dbReference type="InterPro" id="IPR032466">
    <property type="entry name" value="Metal_Hydrolase"/>
</dbReference>
<dbReference type="InterPro" id="IPR011612">
    <property type="entry name" value="Urease_alpha_N_dom"/>
</dbReference>
<dbReference type="InterPro" id="IPR050112">
    <property type="entry name" value="Urease_alpha_subunit"/>
</dbReference>
<dbReference type="InterPro" id="IPR017950">
    <property type="entry name" value="Urease_AS"/>
</dbReference>
<dbReference type="InterPro" id="IPR005848">
    <property type="entry name" value="Urease_asu"/>
</dbReference>
<dbReference type="InterPro" id="IPR017951">
    <property type="entry name" value="Urease_asu_c"/>
</dbReference>
<dbReference type="InterPro" id="IPR029754">
    <property type="entry name" value="Urease_Ni-bd"/>
</dbReference>
<dbReference type="NCBIfam" id="NF009686">
    <property type="entry name" value="PRK13207.1"/>
    <property type="match status" value="1"/>
</dbReference>
<dbReference type="NCBIfam" id="TIGR01792">
    <property type="entry name" value="urease_alph"/>
    <property type="match status" value="1"/>
</dbReference>
<dbReference type="PANTHER" id="PTHR43440">
    <property type="entry name" value="UREASE"/>
    <property type="match status" value="1"/>
</dbReference>
<dbReference type="PANTHER" id="PTHR43440:SF1">
    <property type="entry name" value="UREASE"/>
    <property type="match status" value="1"/>
</dbReference>
<dbReference type="Pfam" id="PF01979">
    <property type="entry name" value="Amidohydro_1"/>
    <property type="match status" value="1"/>
</dbReference>
<dbReference type="Pfam" id="PF00449">
    <property type="entry name" value="Urease_alpha"/>
    <property type="match status" value="1"/>
</dbReference>
<dbReference type="PRINTS" id="PR01752">
    <property type="entry name" value="UREASE"/>
</dbReference>
<dbReference type="SUPFAM" id="SSF51338">
    <property type="entry name" value="Composite domain of metallo-dependent hydrolases"/>
    <property type="match status" value="2"/>
</dbReference>
<dbReference type="SUPFAM" id="SSF51556">
    <property type="entry name" value="Metallo-dependent hydrolases"/>
    <property type="match status" value="1"/>
</dbReference>
<dbReference type="PROSITE" id="PS01120">
    <property type="entry name" value="UREASE_1"/>
    <property type="match status" value="1"/>
</dbReference>
<dbReference type="PROSITE" id="PS00145">
    <property type="entry name" value="UREASE_2"/>
    <property type="match status" value="1"/>
</dbReference>
<dbReference type="PROSITE" id="PS51368">
    <property type="entry name" value="UREASE_3"/>
    <property type="match status" value="1"/>
</dbReference>
<keyword id="KW-0963">Cytoplasm</keyword>
<keyword id="KW-0378">Hydrolase</keyword>
<keyword id="KW-0479">Metal-binding</keyword>
<keyword id="KW-0533">Nickel</keyword>
<keyword id="KW-1185">Reference proteome</keyword>